<accession>Q5BJW3</accession>
<name>TX261_RAT</name>
<protein>
    <recommendedName>
        <fullName>Protein TEX261</fullName>
    </recommendedName>
</protein>
<reference key="1">
    <citation type="journal article" date="2004" name="Genome Res.">
        <title>The status, quality, and expansion of the NIH full-length cDNA project: the Mammalian Gene Collection (MGC).</title>
        <authorList>
            <consortium name="The MGC Project Team"/>
        </authorList>
    </citation>
    <scope>NUCLEOTIDE SEQUENCE [LARGE SCALE MRNA]</scope>
    <source>
        <tissue>Ovary</tissue>
    </source>
</reference>
<proteinExistence type="evidence at transcript level"/>
<keyword id="KW-0472">Membrane</keyword>
<keyword id="KW-1185">Reference proteome</keyword>
<keyword id="KW-0812">Transmembrane</keyword>
<keyword id="KW-1133">Transmembrane helix</keyword>
<organism>
    <name type="scientific">Rattus norvegicus</name>
    <name type="common">Rat</name>
    <dbReference type="NCBI Taxonomy" id="10116"/>
    <lineage>
        <taxon>Eukaryota</taxon>
        <taxon>Metazoa</taxon>
        <taxon>Chordata</taxon>
        <taxon>Craniata</taxon>
        <taxon>Vertebrata</taxon>
        <taxon>Euteleostomi</taxon>
        <taxon>Mammalia</taxon>
        <taxon>Eutheria</taxon>
        <taxon>Euarchontoglires</taxon>
        <taxon>Glires</taxon>
        <taxon>Rodentia</taxon>
        <taxon>Myomorpha</taxon>
        <taxon>Muroidea</taxon>
        <taxon>Muridae</taxon>
        <taxon>Murinae</taxon>
        <taxon>Rattus</taxon>
    </lineage>
</organism>
<gene>
    <name type="primary">Tex261</name>
</gene>
<feature type="chain" id="PRO_0000247436" description="Protein TEX261">
    <location>
        <begin position="1"/>
        <end position="196"/>
    </location>
</feature>
<feature type="transmembrane region" description="Helical" evidence="1">
    <location>
        <begin position="3"/>
        <end position="23"/>
    </location>
</feature>
<feature type="transmembrane region" description="Helical" evidence="1">
    <location>
        <begin position="42"/>
        <end position="62"/>
    </location>
</feature>
<feature type="transmembrane region" description="Helical" evidence="1">
    <location>
        <begin position="70"/>
        <end position="90"/>
    </location>
</feature>
<feature type="transmembrane region" description="Helical" evidence="1">
    <location>
        <begin position="97"/>
        <end position="117"/>
    </location>
</feature>
<feature type="transmembrane region" description="Helical" evidence="1">
    <location>
        <begin position="125"/>
        <end position="145"/>
    </location>
</feature>
<evidence type="ECO:0000255" key="1"/>
<evidence type="ECO:0000305" key="2"/>
<comment type="subcellular location">
    <subcellularLocation>
        <location evidence="2">Membrane</location>
        <topology evidence="2">Multi-pass membrane protein</topology>
    </subcellularLocation>
</comment>
<comment type="similarity">
    <text evidence="2">Belongs to the SVP26 family.</text>
</comment>
<sequence length="196" mass="22524">MWFMYVLSWLSLFIQVAFITLAVAAGLYYLAELIEEYTVATSRIIKYMIWFSTAVLIGLYVFERFPTSMIGVGLFTNLVYFGLLQTFPFIMLTSPNFILSCGLVVVNHYLAFQFFAEEYYPFSEVLAYFTFCLWIIPFAFFVSLSAGENVLPSTMQPGDDVVSNYFTKGKRGKRLGILVVFSFIKEAILPSRQKIY</sequence>
<dbReference type="EMBL" id="BC091302">
    <property type="protein sequence ID" value="AAH91302.1"/>
    <property type="molecule type" value="mRNA"/>
</dbReference>
<dbReference type="RefSeq" id="NP_001017537.1">
    <property type="nucleotide sequence ID" value="NM_001017537.1"/>
</dbReference>
<dbReference type="FunCoup" id="Q5BJW3">
    <property type="interactions" value="1819"/>
</dbReference>
<dbReference type="PhosphoSitePlus" id="Q5BJW3"/>
<dbReference type="PaxDb" id="10116-ENSRNOP00000063367"/>
<dbReference type="GeneID" id="297392"/>
<dbReference type="KEGG" id="rno:297392"/>
<dbReference type="UCSC" id="RGD:1305851">
    <property type="organism name" value="rat"/>
</dbReference>
<dbReference type="AGR" id="RGD:1305851"/>
<dbReference type="CTD" id="113419"/>
<dbReference type="RGD" id="1305851">
    <property type="gene designation" value="Tex261"/>
</dbReference>
<dbReference type="VEuPathDB" id="HostDB:ENSRNOG00000013712"/>
<dbReference type="eggNOG" id="KOG4136">
    <property type="taxonomic scope" value="Eukaryota"/>
</dbReference>
<dbReference type="HOGENOM" id="CLU_058268_2_0_1"/>
<dbReference type="InParanoid" id="Q5BJW3"/>
<dbReference type="OrthoDB" id="28257at2759"/>
<dbReference type="PhylomeDB" id="Q5BJW3"/>
<dbReference type="TreeFam" id="TF324741"/>
<dbReference type="PRO" id="PR:Q5BJW3"/>
<dbReference type="Proteomes" id="UP000002494">
    <property type="component" value="Chromosome 4"/>
</dbReference>
<dbReference type="Bgee" id="ENSRNOG00000013712">
    <property type="expression patterns" value="Expressed in pancreas and 19 other cell types or tissues"/>
</dbReference>
<dbReference type="GO" id="GO:0030134">
    <property type="term" value="C:COPII-coated ER to Golgi transport vesicle"/>
    <property type="evidence" value="ECO:0000318"/>
    <property type="project" value="GO_Central"/>
</dbReference>
<dbReference type="GO" id="GO:0005789">
    <property type="term" value="C:endoplasmic reticulum membrane"/>
    <property type="evidence" value="ECO:0000318"/>
    <property type="project" value="GO_Central"/>
</dbReference>
<dbReference type="GO" id="GO:0000139">
    <property type="term" value="C:Golgi membrane"/>
    <property type="evidence" value="ECO:0000318"/>
    <property type="project" value="GO_Central"/>
</dbReference>
<dbReference type="GO" id="GO:0097020">
    <property type="term" value="F:COPII receptor activity"/>
    <property type="evidence" value="ECO:0000318"/>
    <property type="project" value="GO_Central"/>
</dbReference>
<dbReference type="GO" id="GO:0006888">
    <property type="term" value="P:endoplasmic reticulum to Golgi vesicle-mediated transport"/>
    <property type="evidence" value="ECO:0000318"/>
    <property type="project" value="GO_Central"/>
</dbReference>
<dbReference type="GO" id="GO:0043065">
    <property type="term" value="P:positive regulation of apoptotic process"/>
    <property type="evidence" value="ECO:0000266"/>
    <property type="project" value="RGD"/>
</dbReference>
<dbReference type="InterPro" id="IPR007277">
    <property type="entry name" value="Svp26/Tex261"/>
</dbReference>
<dbReference type="PANTHER" id="PTHR13144:SF0">
    <property type="entry name" value="PROTEIN TEX261"/>
    <property type="match status" value="1"/>
</dbReference>
<dbReference type="PANTHER" id="PTHR13144">
    <property type="entry name" value="TEX261 PROTEIN"/>
    <property type="match status" value="1"/>
</dbReference>
<dbReference type="Pfam" id="PF04148">
    <property type="entry name" value="Erv26"/>
    <property type="match status" value="1"/>
</dbReference>